<proteinExistence type="inferred from homology"/>
<evidence type="ECO:0000250" key="1"/>
<evidence type="ECO:0000255" key="2">
    <source>
        <dbReference type="HAMAP-Rule" id="MF_00118"/>
    </source>
</evidence>
<protein>
    <recommendedName>
        <fullName evidence="2">Elongation factor Tu</fullName>
        <shortName evidence="2">EF-Tu</shortName>
        <ecNumber evidence="2">3.6.5.3</ecNumber>
    </recommendedName>
</protein>
<gene>
    <name evidence="2" type="primary">tuf</name>
    <name type="ordered locus">SAOUHSC_00530</name>
</gene>
<reference key="1">
    <citation type="book" date="2006" name="Gram positive pathogens, 2nd edition">
        <title>The Staphylococcus aureus NCTC 8325 genome.</title>
        <editorList>
            <person name="Fischetti V."/>
            <person name="Novick R."/>
            <person name="Ferretti J."/>
            <person name="Portnoy D."/>
            <person name="Rood J."/>
        </editorList>
        <authorList>
            <person name="Gillaspy A.F."/>
            <person name="Worrell V."/>
            <person name="Orvis J."/>
            <person name="Roe B.A."/>
            <person name="Dyer D.W."/>
            <person name="Iandolo J.J."/>
        </authorList>
    </citation>
    <scope>NUCLEOTIDE SEQUENCE [LARGE SCALE GENOMIC DNA]</scope>
    <source>
        <strain>NCTC 8325 / PS 47</strain>
    </source>
</reference>
<sequence>MAKEKFDRSKEHANIGTIGHVDHGKTTLTAAIATVLAKNGDSVAQSYDMIDNAPEEKERGITINTSHIEYQTDKRHYAHVDCPGHADYVKNMITGAAQMDGGILVVSAADGPMPQTREHILLSRNVGVPALVVFLNKVDMVDDEELLELVEMEVRDLLSEYDFPGDDVPVIAGSALKALEGDAQYEEKILELMEAVDTYIPTPERDSDKPFMMPVEDVFSITGRGTVATGRVERGQIKVGEEVEIIGLHDTSKTTVTGVEMFRKLLDYAEAGDNIGALLRGVAREDVQRGQVLAAPGSITPHTEFKAEVYVLSKDEGGRHTPFFSNYRPQFYFRTTDVTGVVHLPEGTEMVMPGDNVEMTVELIAPIAIEDGTRFSIREGGRTVGSGVVTEIIK</sequence>
<accession>Q2G0N0</accession>
<dbReference type="EC" id="3.6.5.3" evidence="2"/>
<dbReference type="EMBL" id="CP000253">
    <property type="protein sequence ID" value="ABD29678.1"/>
    <property type="molecule type" value="Genomic_DNA"/>
</dbReference>
<dbReference type="RefSeq" id="WP_001040568.1">
    <property type="nucleotide sequence ID" value="NZ_LS483365.1"/>
</dbReference>
<dbReference type="RefSeq" id="YP_499102.1">
    <property type="nucleotide sequence ID" value="NC_007795.1"/>
</dbReference>
<dbReference type="SMR" id="Q2G0N0"/>
<dbReference type="STRING" id="93061.SAOUHSC_00530"/>
<dbReference type="PaxDb" id="1280-SAXN108_0602"/>
<dbReference type="GeneID" id="3920383"/>
<dbReference type="KEGG" id="sao:SAOUHSC_00530"/>
<dbReference type="PATRIC" id="fig|93061.5.peg.476"/>
<dbReference type="eggNOG" id="COG0050">
    <property type="taxonomic scope" value="Bacteria"/>
</dbReference>
<dbReference type="HOGENOM" id="CLU_007265_0_0_9"/>
<dbReference type="OrthoDB" id="9804504at2"/>
<dbReference type="PRO" id="PR:Q2G0N0"/>
<dbReference type="Proteomes" id="UP000008816">
    <property type="component" value="Chromosome"/>
</dbReference>
<dbReference type="GO" id="GO:0005737">
    <property type="term" value="C:cytoplasm"/>
    <property type="evidence" value="ECO:0007669"/>
    <property type="project" value="UniProtKB-SubCell"/>
</dbReference>
<dbReference type="GO" id="GO:0005525">
    <property type="term" value="F:GTP binding"/>
    <property type="evidence" value="ECO:0007669"/>
    <property type="project" value="UniProtKB-UniRule"/>
</dbReference>
<dbReference type="GO" id="GO:0003924">
    <property type="term" value="F:GTPase activity"/>
    <property type="evidence" value="ECO:0007669"/>
    <property type="project" value="InterPro"/>
</dbReference>
<dbReference type="GO" id="GO:0003746">
    <property type="term" value="F:translation elongation factor activity"/>
    <property type="evidence" value="ECO:0000318"/>
    <property type="project" value="GO_Central"/>
</dbReference>
<dbReference type="GO" id="GO:0006414">
    <property type="term" value="P:translational elongation"/>
    <property type="evidence" value="ECO:0000318"/>
    <property type="project" value="GO_Central"/>
</dbReference>
<dbReference type="CDD" id="cd01884">
    <property type="entry name" value="EF_Tu"/>
    <property type="match status" value="1"/>
</dbReference>
<dbReference type="CDD" id="cd03697">
    <property type="entry name" value="EFTU_II"/>
    <property type="match status" value="1"/>
</dbReference>
<dbReference type="CDD" id="cd03707">
    <property type="entry name" value="EFTU_III"/>
    <property type="match status" value="1"/>
</dbReference>
<dbReference type="FunFam" id="2.40.30.10:FF:000001">
    <property type="entry name" value="Elongation factor Tu"/>
    <property type="match status" value="1"/>
</dbReference>
<dbReference type="FunFam" id="3.40.50.300:FF:000003">
    <property type="entry name" value="Elongation factor Tu"/>
    <property type="match status" value="1"/>
</dbReference>
<dbReference type="Gene3D" id="3.40.50.300">
    <property type="entry name" value="P-loop containing nucleotide triphosphate hydrolases"/>
    <property type="match status" value="1"/>
</dbReference>
<dbReference type="Gene3D" id="2.40.30.10">
    <property type="entry name" value="Translation factors"/>
    <property type="match status" value="2"/>
</dbReference>
<dbReference type="HAMAP" id="MF_00118_B">
    <property type="entry name" value="EF_Tu_B"/>
    <property type="match status" value="1"/>
</dbReference>
<dbReference type="InterPro" id="IPR041709">
    <property type="entry name" value="EF-Tu_GTP-bd"/>
</dbReference>
<dbReference type="InterPro" id="IPR050055">
    <property type="entry name" value="EF-Tu_GTPase"/>
</dbReference>
<dbReference type="InterPro" id="IPR004161">
    <property type="entry name" value="EFTu-like_2"/>
</dbReference>
<dbReference type="InterPro" id="IPR033720">
    <property type="entry name" value="EFTU_2"/>
</dbReference>
<dbReference type="InterPro" id="IPR031157">
    <property type="entry name" value="G_TR_CS"/>
</dbReference>
<dbReference type="InterPro" id="IPR027417">
    <property type="entry name" value="P-loop_NTPase"/>
</dbReference>
<dbReference type="InterPro" id="IPR005225">
    <property type="entry name" value="Small_GTP-bd"/>
</dbReference>
<dbReference type="InterPro" id="IPR000795">
    <property type="entry name" value="T_Tr_GTP-bd_dom"/>
</dbReference>
<dbReference type="InterPro" id="IPR009000">
    <property type="entry name" value="Transl_B-barrel_sf"/>
</dbReference>
<dbReference type="InterPro" id="IPR009001">
    <property type="entry name" value="Transl_elong_EF1A/Init_IF2_C"/>
</dbReference>
<dbReference type="InterPro" id="IPR004541">
    <property type="entry name" value="Transl_elong_EFTu/EF1A_bac/org"/>
</dbReference>
<dbReference type="InterPro" id="IPR004160">
    <property type="entry name" value="Transl_elong_EFTu/EF1A_C"/>
</dbReference>
<dbReference type="NCBIfam" id="TIGR00485">
    <property type="entry name" value="EF-Tu"/>
    <property type="match status" value="1"/>
</dbReference>
<dbReference type="NCBIfam" id="NF000766">
    <property type="entry name" value="PRK00049.1"/>
    <property type="match status" value="1"/>
</dbReference>
<dbReference type="NCBIfam" id="NF009372">
    <property type="entry name" value="PRK12735.1"/>
    <property type="match status" value="1"/>
</dbReference>
<dbReference type="NCBIfam" id="NF009373">
    <property type="entry name" value="PRK12736.1"/>
    <property type="match status" value="1"/>
</dbReference>
<dbReference type="NCBIfam" id="TIGR00231">
    <property type="entry name" value="small_GTP"/>
    <property type="match status" value="1"/>
</dbReference>
<dbReference type="PANTHER" id="PTHR43721:SF22">
    <property type="entry name" value="ELONGATION FACTOR TU, MITOCHONDRIAL"/>
    <property type="match status" value="1"/>
</dbReference>
<dbReference type="PANTHER" id="PTHR43721">
    <property type="entry name" value="ELONGATION FACTOR TU-RELATED"/>
    <property type="match status" value="1"/>
</dbReference>
<dbReference type="Pfam" id="PF00009">
    <property type="entry name" value="GTP_EFTU"/>
    <property type="match status" value="1"/>
</dbReference>
<dbReference type="Pfam" id="PF03144">
    <property type="entry name" value="GTP_EFTU_D2"/>
    <property type="match status" value="1"/>
</dbReference>
<dbReference type="Pfam" id="PF03143">
    <property type="entry name" value="GTP_EFTU_D3"/>
    <property type="match status" value="1"/>
</dbReference>
<dbReference type="PRINTS" id="PR00315">
    <property type="entry name" value="ELONGATNFCT"/>
</dbReference>
<dbReference type="SUPFAM" id="SSF50465">
    <property type="entry name" value="EF-Tu/eEF-1alpha/eIF2-gamma C-terminal domain"/>
    <property type="match status" value="1"/>
</dbReference>
<dbReference type="SUPFAM" id="SSF52540">
    <property type="entry name" value="P-loop containing nucleoside triphosphate hydrolases"/>
    <property type="match status" value="1"/>
</dbReference>
<dbReference type="SUPFAM" id="SSF50447">
    <property type="entry name" value="Translation proteins"/>
    <property type="match status" value="1"/>
</dbReference>
<dbReference type="PROSITE" id="PS00301">
    <property type="entry name" value="G_TR_1"/>
    <property type="match status" value="1"/>
</dbReference>
<dbReference type="PROSITE" id="PS51722">
    <property type="entry name" value="G_TR_2"/>
    <property type="match status" value="1"/>
</dbReference>
<name>EFTU_STAA8</name>
<feature type="chain" id="PRO_1000015750" description="Elongation factor Tu">
    <location>
        <begin position="1"/>
        <end position="394"/>
    </location>
</feature>
<feature type="domain" description="tr-type G">
    <location>
        <begin position="10"/>
        <end position="204"/>
    </location>
</feature>
<feature type="region of interest" description="G1" evidence="1">
    <location>
        <begin position="19"/>
        <end position="26"/>
    </location>
</feature>
<feature type="region of interest" description="G2" evidence="1">
    <location>
        <begin position="60"/>
        <end position="64"/>
    </location>
</feature>
<feature type="region of interest" description="G3" evidence="1">
    <location>
        <begin position="81"/>
        <end position="84"/>
    </location>
</feature>
<feature type="region of interest" description="G4" evidence="1">
    <location>
        <begin position="136"/>
        <end position="139"/>
    </location>
</feature>
<feature type="region of interest" description="G5" evidence="1">
    <location>
        <begin position="174"/>
        <end position="176"/>
    </location>
</feature>
<feature type="binding site" evidence="2">
    <location>
        <begin position="19"/>
        <end position="26"/>
    </location>
    <ligand>
        <name>GTP</name>
        <dbReference type="ChEBI" id="CHEBI:37565"/>
    </ligand>
</feature>
<feature type="binding site" evidence="2">
    <location>
        <position position="26"/>
    </location>
    <ligand>
        <name>Mg(2+)</name>
        <dbReference type="ChEBI" id="CHEBI:18420"/>
    </ligand>
</feature>
<feature type="binding site" evidence="2">
    <location>
        <begin position="81"/>
        <end position="85"/>
    </location>
    <ligand>
        <name>GTP</name>
        <dbReference type="ChEBI" id="CHEBI:37565"/>
    </ligand>
</feature>
<feature type="binding site" evidence="2">
    <location>
        <begin position="136"/>
        <end position="139"/>
    </location>
    <ligand>
        <name>GTP</name>
        <dbReference type="ChEBI" id="CHEBI:37565"/>
    </ligand>
</feature>
<comment type="function">
    <text evidence="2">GTP hydrolase that promotes the GTP-dependent binding of aminoacyl-tRNA to the A-site of ribosomes during protein biosynthesis.</text>
</comment>
<comment type="catalytic activity">
    <reaction evidence="2">
        <text>GTP + H2O = GDP + phosphate + H(+)</text>
        <dbReference type="Rhea" id="RHEA:19669"/>
        <dbReference type="ChEBI" id="CHEBI:15377"/>
        <dbReference type="ChEBI" id="CHEBI:15378"/>
        <dbReference type="ChEBI" id="CHEBI:37565"/>
        <dbReference type="ChEBI" id="CHEBI:43474"/>
        <dbReference type="ChEBI" id="CHEBI:58189"/>
        <dbReference type="EC" id="3.6.5.3"/>
    </reaction>
    <physiologicalReaction direction="left-to-right" evidence="2">
        <dbReference type="Rhea" id="RHEA:19670"/>
    </physiologicalReaction>
</comment>
<comment type="subunit">
    <text evidence="2">Monomer.</text>
</comment>
<comment type="subcellular location">
    <subcellularLocation>
        <location evidence="2">Cytoplasm</location>
    </subcellularLocation>
</comment>
<comment type="similarity">
    <text evidence="2">Belongs to the TRAFAC class translation factor GTPase superfamily. Classic translation factor GTPase family. EF-Tu/EF-1A subfamily.</text>
</comment>
<organism>
    <name type="scientific">Staphylococcus aureus (strain NCTC 8325 / PS 47)</name>
    <dbReference type="NCBI Taxonomy" id="93061"/>
    <lineage>
        <taxon>Bacteria</taxon>
        <taxon>Bacillati</taxon>
        <taxon>Bacillota</taxon>
        <taxon>Bacilli</taxon>
        <taxon>Bacillales</taxon>
        <taxon>Staphylococcaceae</taxon>
        <taxon>Staphylococcus</taxon>
    </lineage>
</organism>
<keyword id="KW-0963">Cytoplasm</keyword>
<keyword id="KW-0251">Elongation factor</keyword>
<keyword id="KW-0342">GTP-binding</keyword>
<keyword id="KW-0378">Hydrolase</keyword>
<keyword id="KW-0460">Magnesium</keyword>
<keyword id="KW-0479">Metal-binding</keyword>
<keyword id="KW-0547">Nucleotide-binding</keyword>
<keyword id="KW-0648">Protein biosynthesis</keyword>
<keyword id="KW-1185">Reference proteome</keyword>